<comment type="subcellular location">
    <subcellularLocation>
        <location evidence="2">Cell membrane</location>
        <topology evidence="2">Multi-pass membrane protein</topology>
    </subcellularLocation>
</comment>
<comment type="similarity">
    <text evidence="2">Belongs to the alanine or glycine:cation symporter (AGCS) (TC 2.A.25) family.</text>
</comment>
<reference key="1">
    <citation type="submission" date="1997-12" db="EMBL/GenBank/DDBJ databases">
        <title>A 17.8 kb segment in the spoVB-nadC region of the Bacillus subtilis 168 chromosome: sequencing and ruv operon identification.</title>
        <authorList>
            <person name="Tosato V."/>
            <person name="Bolotin A."/>
            <person name="Bertani I."/>
            <person name="Valentino I."/>
            <person name="Bruschi C.V."/>
        </authorList>
    </citation>
    <scope>NUCLEOTIDE SEQUENCE [GENOMIC DNA]</scope>
    <source>
        <strain>168</strain>
    </source>
</reference>
<reference key="2">
    <citation type="journal article" date="1997" name="Nature">
        <title>The complete genome sequence of the Gram-positive bacterium Bacillus subtilis.</title>
        <authorList>
            <person name="Kunst F."/>
            <person name="Ogasawara N."/>
            <person name="Moszer I."/>
            <person name="Albertini A.M."/>
            <person name="Alloni G."/>
            <person name="Azevedo V."/>
            <person name="Bertero M.G."/>
            <person name="Bessieres P."/>
            <person name="Bolotin A."/>
            <person name="Borchert S."/>
            <person name="Borriss R."/>
            <person name="Boursier L."/>
            <person name="Brans A."/>
            <person name="Braun M."/>
            <person name="Brignell S.C."/>
            <person name="Bron S."/>
            <person name="Brouillet S."/>
            <person name="Bruschi C.V."/>
            <person name="Caldwell B."/>
            <person name="Capuano V."/>
            <person name="Carter N.M."/>
            <person name="Choi S.-K."/>
            <person name="Codani J.-J."/>
            <person name="Connerton I.F."/>
            <person name="Cummings N.J."/>
            <person name="Daniel R.A."/>
            <person name="Denizot F."/>
            <person name="Devine K.M."/>
            <person name="Duesterhoeft A."/>
            <person name="Ehrlich S.D."/>
            <person name="Emmerson P.T."/>
            <person name="Entian K.-D."/>
            <person name="Errington J."/>
            <person name="Fabret C."/>
            <person name="Ferrari E."/>
            <person name="Foulger D."/>
            <person name="Fritz C."/>
            <person name="Fujita M."/>
            <person name="Fujita Y."/>
            <person name="Fuma S."/>
            <person name="Galizzi A."/>
            <person name="Galleron N."/>
            <person name="Ghim S.-Y."/>
            <person name="Glaser P."/>
            <person name="Goffeau A."/>
            <person name="Golightly E.J."/>
            <person name="Grandi G."/>
            <person name="Guiseppi G."/>
            <person name="Guy B.J."/>
            <person name="Haga K."/>
            <person name="Haiech J."/>
            <person name="Harwood C.R."/>
            <person name="Henaut A."/>
            <person name="Hilbert H."/>
            <person name="Holsappel S."/>
            <person name="Hosono S."/>
            <person name="Hullo M.-F."/>
            <person name="Itaya M."/>
            <person name="Jones L.-M."/>
            <person name="Joris B."/>
            <person name="Karamata D."/>
            <person name="Kasahara Y."/>
            <person name="Klaerr-Blanchard M."/>
            <person name="Klein C."/>
            <person name="Kobayashi Y."/>
            <person name="Koetter P."/>
            <person name="Koningstein G."/>
            <person name="Krogh S."/>
            <person name="Kumano M."/>
            <person name="Kurita K."/>
            <person name="Lapidus A."/>
            <person name="Lardinois S."/>
            <person name="Lauber J."/>
            <person name="Lazarevic V."/>
            <person name="Lee S.-M."/>
            <person name="Levine A."/>
            <person name="Liu H."/>
            <person name="Masuda S."/>
            <person name="Mauel C."/>
            <person name="Medigue C."/>
            <person name="Medina N."/>
            <person name="Mellado R.P."/>
            <person name="Mizuno M."/>
            <person name="Moestl D."/>
            <person name="Nakai S."/>
            <person name="Noback M."/>
            <person name="Noone D."/>
            <person name="O'Reilly M."/>
            <person name="Ogawa K."/>
            <person name="Ogiwara A."/>
            <person name="Oudega B."/>
            <person name="Park S.-H."/>
            <person name="Parro V."/>
            <person name="Pohl T.M."/>
            <person name="Portetelle D."/>
            <person name="Porwollik S."/>
            <person name="Prescott A.M."/>
            <person name="Presecan E."/>
            <person name="Pujic P."/>
            <person name="Purnelle B."/>
            <person name="Rapoport G."/>
            <person name="Rey M."/>
            <person name="Reynolds S."/>
            <person name="Rieger M."/>
            <person name="Rivolta C."/>
            <person name="Rocha E."/>
            <person name="Roche B."/>
            <person name="Rose M."/>
            <person name="Sadaie Y."/>
            <person name="Sato T."/>
            <person name="Scanlan E."/>
            <person name="Schleich S."/>
            <person name="Schroeter R."/>
            <person name="Scoffone F."/>
            <person name="Sekiguchi J."/>
            <person name="Sekowska A."/>
            <person name="Seror S.J."/>
            <person name="Serror P."/>
            <person name="Shin B.-S."/>
            <person name="Soldo B."/>
            <person name="Sorokin A."/>
            <person name="Tacconi E."/>
            <person name="Takagi T."/>
            <person name="Takahashi H."/>
            <person name="Takemaru K."/>
            <person name="Takeuchi M."/>
            <person name="Tamakoshi A."/>
            <person name="Tanaka T."/>
            <person name="Terpstra P."/>
            <person name="Tognoni A."/>
            <person name="Tosato V."/>
            <person name="Uchiyama S."/>
            <person name="Vandenbol M."/>
            <person name="Vannier F."/>
            <person name="Vassarotti A."/>
            <person name="Viari A."/>
            <person name="Wambutt R."/>
            <person name="Wedler E."/>
            <person name="Wedler H."/>
            <person name="Weitzenegger T."/>
            <person name="Winters P."/>
            <person name="Wipat A."/>
            <person name="Yamamoto H."/>
            <person name="Yamane K."/>
            <person name="Yasumoto K."/>
            <person name="Yata K."/>
            <person name="Yoshida K."/>
            <person name="Yoshikawa H.-F."/>
            <person name="Zumstein E."/>
            <person name="Yoshikawa H."/>
            <person name="Danchin A."/>
        </authorList>
    </citation>
    <scope>NUCLEOTIDE SEQUENCE [LARGE SCALE GENOMIC DNA]</scope>
    <source>
        <strain>168</strain>
    </source>
</reference>
<reference key="3">
    <citation type="journal article" date="2009" name="Microbiology">
        <title>From a consortium sequence to a unified sequence: the Bacillus subtilis 168 reference genome a decade later.</title>
        <authorList>
            <person name="Barbe V."/>
            <person name="Cruveiller S."/>
            <person name="Kunst F."/>
            <person name="Lenoble P."/>
            <person name="Meurice G."/>
            <person name="Sekowska A."/>
            <person name="Vallenet D."/>
            <person name="Wang T."/>
            <person name="Moszer I."/>
            <person name="Medigue C."/>
            <person name="Danchin A."/>
        </authorList>
    </citation>
    <scope>SEQUENCE REVISION TO 128</scope>
</reference>
<keyword id="KW-0029">Amino-acid transport</keyword>
<keyword id="KW-1003">Cell membrane</keyword>
<keyword id="KW-0406">Ion transport</keyword>
<keyword id="KW-0472">Membrane</keyword>
<keyword id="KW-1185">Reference proteome</keyword>
<keyword id="KW-0915">Sodium</keyword>
<keyword id="KW-0739">Sodium transport</keyword>
<keyword id="KW-0769">Symport</keyword>
<keyword id="KW-0812">Transmembrane</keyword>
<keyword id="KW-1133">Transmembrane helix</keyword>
<keyword id="KW-0813">Transport</keyword>
<evidence type="ECO:0000255" key="1"/>
<evidence type="ECO:0000305" key="2"/>
<accession>O32060</accession>
<accession>C0SPA4</accession>
<accession>Q799E0</accession>
<gene>
    <name type="primary">yrbD</name>
    <name type="ordered locus">BSU27810</name>
</gene>
<protein>
    <recommendedName>
        <fullName>Putative sodium/proton-dependent alanine carrier protein YrbD</fullName>
    </recommendedName>
</protein>
<sequence>MADFVASLNAVLWSTPVIYILLGIGFAFSIMTRFLQVRHLKEMIVQMFKGKSSEAGVSSFQALSIALSGRVGTGNIAGVATAIAFGGPGAVFWMWAIAFIGAASAFVESTLAQIYKVKQDGQYRGGPAYYIEKGLGIKWFAVLFAAAALIAMAFLMPGVQSNSIAAGIQNAFGISPFVTGCGLVLLLGFIIFGGVKRIANAAQMIVPFMAIGYILLSLIIIVMNVSELPAVISLIFKSAFALDSAFGGLIGMAISWGVKRGIYSNEAGQGTGPHPAAAAEVSHPVKQGLVQAFSVYIDTLFVCSATAFMILFTGMYNTQAADGSFIVHQLKGVEAGPGFTQAAIDSVLPGFGAGFVAIALFFFAFTTIMAYYYIAETNIAYLARGRESKWAMLGLKLIILAATFYGTVKTASLAWALGDAGLGIMVWLNVIAIVLLAKPALLALKDYERQKKQGLDPIFDPKALGIKNADFWEKEYTHESERVS</sequence>
<dbReference type="EMBL" id="Y15896">
    <property type="protein sequence ID" value="CAB75325.1"/>
    <property type="molecule type" value="Genomic_DNA"/>
</dbReference>
<dbReference type="EMBL" id="AL009126">
    <property type="protein sequence ID" value="CAB14741.2"/>
    <property type="molecule type" value="Genomic_DNA"/>
</dbReference>
<dbReference type="PIR" id="C69972">
    <property type="entry name" value="C69972"/>
</dbReference>
<dbReference type="RefSeq" id="WP_004398698.1">
    <property type="nucleotide sequence ID" value="NZ_OZ025638.1"/>
</dbReference>
<dbReference type="SMR" id="O32060"/>
<dbReference type="FunCoup" id="O32060">
    <property type="interactions" value="24"/>
</dbReference>
<dbReference type="STRING" id="224308.BSU27810"/>
<dbReference type="PaxDb" id="224308-BSU27810"/>
<dbReference type="EnsemblBacteria" id="CAB14741">
    <property type="protein sequence ID" value="CAB14741"/>
    <property type="gene ID" value="BSU_27810"/>
</dbReference>
<dbReference type="GeneID" id="937941"/>
<dbReference type="KEGG" id="bsu:BSU27810"/>
<dbReference type="PATRIC" id="fig|224308.179.peg.3022"/>
<dbReference type="eggNOG" id="COG1115">
    <property type="taxonomic scope" value="Bacteria"/>
</dbReference>
<dbReference type="InParanoid" id="O32060"/>
<dbReference type="OrthoDB" id="9804874at2"/>
<dbReference type="PhylomeDB" id="O32060"/>
<dbReference type="BioCyc" id="BSUB:BSU27810-MONOMER"/>
<dbReference type="Proteomes" id="UP000001570">
    <property type="component" value="Chromosome"/>
</dbReference>
<dbReference type="GO" id="GO:0005886">
    <property type="term" value="C:plasma membrane"/>
    <property type="evidence" value="ECO:0000318"/>
    <property type="project" value="GO_Central"/>
</dbReference>
<dbReference type="GO" id="GO:0005283">
    <property type="term" value="F:amino acid:sodium symporter activity"/>
    <property type="evidence" value="ECO:0007669"/>
    <property type="project" value="InterPro"/>
</dbReference>
<dbReference type="FunFam" id="1.20.1740.10:FF:000004">
    <property type="entry name" value="Sodium:alanine symporter family protein"/>
    <property type="match status" value="1"/>
</dbReference>
<dbReference type="InterPro" id="IPR001463">
    <property type="entry name" value="Na/Ala_symport"/>
</dbReference>
<dbReference type="NCBIfam" id="TIGR00835">
    <property type="entry name" value="agcS"/>
    <property type="match status" value="1"/>
</dbReference>
<dbReference type="PANTHER" id="PTHR30330">
    <property type="entry name" value="AGSS FAMILY TRANSPORTER, SODIUM-ALANINE"/>
    <property type="match status" value="1"/>
</dbReference>
<dbReference type="PANTHER" id="PTHR30330:SF7">
    <property type="entry name" value="SODIUM_PROTON-DEPENDENT ALANINE CARRIER PROTEIN YRBD-RELATED"/>
    <property type="match status" value="1"/>
</dbReference>
<dbReference type="Pfam" id="PF01235">
    <property type="entry name" value="Na_Ala_symp"/>
    <property type="match status" value="1"/>
</dbReference>
<dbReference type="PRINTS" id="PR00175">
    <property type="entry name" value="NAALASMPORT"/>
</dbReference>
<proteinExistence type="inferred from homology"/>
<feature type="chain" id="PRO_0000377723" description="Putative sodium/proton-dependent alanine carrier protein YrbD">
    <location>
        <begin position="1"/>
        <end position="484"/>
    </location>
</feature>
<feature type="transmembrane region" description="Helical" evidence="1">
    <location>
        <begin position="11"/>
        <end position="31"/>
    </location>
</feature>
<feature type="transmembrane region" description="Helical" evidence="1">
    <location>
        <begin position="66"/>
        <end position="88"/>
    </location>
</feature>
<feature type="transmembrane region" description="Helical" evidence="1">
    <location>
        <begin position="92"/>
        <end position="114"/>
    </location>
</feature>
<feature type="transmembrane region" description="Helical" evidence="1">
    <location>
        <begin position="139"/>
        <end position="159"/>
    </location>
</feature>
<feature type="transmembrane region" description="Helical" evidence="1">
    <location>
        <begin position="172"/>
        <end position="192"/>
    </location>
</feature>
<feature type="transmembrane region" description="Helical" evidence="1">
    <location>
        <begin position="205"/>
        <end position="225"/>
    </location>
</feature>
<feature type="transmembrane region" description="Helical" evidence="1">
    <location>
        <begin position="238"/>
        <end position="258"/>
    </location>
</feature>
<feature type="transmembrane region" description="Helical" evidence="1">
    <location>
        <begin position="292"/>
        <end position="312"/>
    </location>
</feature>
<feature type="transmembrane region" description="Helical" evidence="1">
    <location>
        <begin position="350"/>
        <end position="370"/>
    </location>
</feature>
<feature type="transmembrane region" description="Helical" evidence="1">
    <location>
        <begin position="390"/>
        <end position="410"/>
    </location>
</feature>
<feature type="transmembrane region" description="Helical" evidence="1">
    <location>
        <begin position="416"/>
        <end position="436"/>
    </location>
</feature>
<feature type="sequence conflict" description="In Ref. 1; CAB75325." evidence="2" ref="1">
    <original>A</original>
    <variation>R</variation>
    <location>
        <position position="128"/>
    </location>
</feature>
<organism>
    <name type="scientific">Bacillus subtilis (strain 168)</name>
    <dbReference type="NCBI Taxonomy" id="224308"/>
    <lineage>
        <taxon>Bacteria</taxon>
        <taxon>Bacillati</taxon>
        <taxon>Bacillota</taxon>
        <taxon>Bacilli</taxon>
        <taxon>Bacillales</taxon>
        <taxon>Bacillaceae</taxon>
        <taxon>Bacillus</taxon>
    </lineage>
</organism>
<name>YRBD_BACSU</name>